<gene>
    <name type="primary">pstS2</name>
    <name type="ordered locus">gbs1953</name>
</gene>
<evidence type="ECO:0000250" key="1"/>
<evidence type="ECO:0000255" key="2">
    <source>
        <dbReference type="PROSITE-ProRule" id="PRU00303"/>
    </source>
</evidence>
<evidence type="ECO:0000305" key="3"/>
<keyword id="KW-1003">Cell membrane</keyword>
<keyword id="KW-0449">Lipoprotein</keyword>
<keyword id="KW-0472">Membrane</keyword>
<keyword id="KW-0564">Palmitate</keyword>
<keyword id="KW-0592">Phosphate transport</keyword>
<keyword id="KW-0732">Signal</keyword>
<keyword id="KW-0813">Transport</keyword>
<reference key="1">
    <citation type="journal article" date="2002" name="Mol. Microbiol.">
        <title>Genome sequence of Streptococcus agalactiae, a pathogen causing invasive neonatal disease.</title>
        <authorList>
            <person name="Glaser P."/>
            <person name="Rusniok C."/>
            <person name="Buchrieser C."/>
            <person name="Chevalier F."/>
            <person name="Frangeul L."/>
            <person name="Msadek T."/>
            <person name="Zouine M."/>
            <person name="Couve E."/>
            <person name="Lalioui L."/>
            <person name="Poyart C."/>
            <person name="Trieu-Cuot P."/>
            <person name="Kunst F."/>
        </authorList>
    </citation>
    <scope>NUCLEOTIDE SEQUENCE [LARGE SCALE GENOMIC DNA]</scope>
    <source>
        <strain>NEM316</strain>
    </source>
</reference>
<organism>
    <name type="scientific">Streptococcus agalactiae serotype III (strain NEM316)</name>
    <dbReference type="NCBI Taxonomy" id="211110"/>
    <lineage>
        <taxon>Bacteria</taxon>
        <taxon>Bacillati</taxon>
        <taxon>Bacillota</taxon>
        <taxon>Bacilli</taxon>
        <taxon>Lactobacillales</taxon>
        <taxon>Streptococcaceae</taxon>
        <taxon>Streptococcus</taxon>
    </lineage>
</organism>
<accession>Q8E310</accession>
<proteinExistence type="inferred from homology"/>
<dbReference type="EMBL" id="AL766855">
    <property type="protein sequence ID" value="CAD47612.1"/>
    <property type="molecule type" value="Genomic_DNA"/>
</dbReference>
<dbReference type="PIR" id="A61607">
    <property type="entry name" value="A61607"/>
</dbReference>
<dbReference type="RefSeq" id="WP_000716331.1">
    <property type="nucleotide sequence ID" value="NC_004368.1"/>
</dbReference>
<dbReference type="SMR" id="Q8E310"/>
<dbReference type="KEGG" id="san:gbs1953"/>
<dbReference type="eggNOG" id="COG0226">
    <property type="taxonomic scope" value="Bacteria"/>
</dbReference>
<dbReference type="HOGENOM" id="CLU_073531_0_0_9"/>
<dbReference type="Proteomes" id="UP000000823">
    <property type="component" value="Chromosome"/>
</dbReference>
<dbReference type="GO" id="GO:0005886">
    <property type="term" value="C:plasma membrane"/>
    <property type="evidence" value="ECO:0007669"/>
    <property type="project" value="UniProtKB-SubCell"/>
</dbReference>
<dbReference type="GO" id="GO:0006817">
    <property type="term" value="P:phosphate ion transport"/>
    <property type="evidence" value="ECO:0007669"/>
    <property type="project" value="UniProtKB-KW"/>
</dbReference>
<dbReference type="Gene3D" id="3.40.190.10">
    <property type="entry name" value="Periplasmic binding protein-like II"/>
    <property type="match status" value="2"/>
</dbReference>
<dbReference type="InterPro" id="IPR024370">
    <property type="entry name" value="PBP_domain"/>
</dbReference>
<dbReference type="InterPro" id="IPR050811">
    <property type="entry name" value="Phosphate_ABC_transporter"/>
</dbReference>
<dbReference type="PANTHER" id="PTHR30570">
    <property type="entry name" value="PERIPLASMIC PHOSPHATE BINDING COMPONENT OF PHOSPHATE ABC TRANSPORTER"/>
    <property type="match status" value="1"/>
</dbReference>
<dbReference type="PANTHER" id="PTHR30570:SF1">
    <property type="entry name" value="PHOSPHATE-BINDING PROTEIN PSTS"/>
    <property type="match status" value="1"/>
</dbReference>
<dbReference type="Pfam" id="PF12849">
    <property type="entry name" value="PBP_like_2"/>
    <property type="match status" value="2"/>
</dbReference>
<dbReference type="SUPFAM" id="SSF53850">
    <property type="entry name" value="Periplasmic binding protein-like II"/>
    <property type="match status" value="2"/>
</dbReference>
<dbReference type="PROSITE" id="PS51257">
    <property type="entry name" value="PROKAR_LIPOPROTEIN"/>
    <property type="match status" value="1"/>
</dbReference>
<feature type="signal peptide" evidence="2">
    <location>
        <begin position="1"/>
        <end position="23"/>
    </location>
</feature>
<feature type="chain" id="PRO_0000281667" description="Phosphate-binding protein PstS 2">
    <location>
        <begin position="24"/>
        <end position="293"/>
    </location>
</feature>
<feature type="lipid moiety-binding region" description="N-palmitoyl cysteine" evidence="2">
    <location>
        <position position="24"/>
    </location>
</feature>
<feature type="lipid moiety-binding region" description="S-diacylglycerol cysteine" evidence="2">
    <location>
        <position position="24"/>
    </location>
</feature>
<sequence>MKKHKMLSLLAVSGLMGIGILAGCSNDSSSSSKGTINIVSREEGSGTRGAFIELFGIESKNKKGEKVDHTSDAATVTNSTSVMLTTVSKDPSAIGYSSLGSLNSSVKVLKIDGKNATVKDIKSGSYKISRPFNIVTKEGKEKEATKDFIDYILSKDGQAVVEKNGYIPLDNAKAYQAKVSSGKVVIAGSSSVTPVMEKIKEAYHKVNAKVDVEIQQSDSSTGITSAIDGSADIGMASRELDKTESSKGVKATVIATDGIAVVVNKKNKVNDLSTKQVKDIFTGKTTSWSDLSK</sequence>
<protein>
    <recommendedName>
        <fullName>Phosphate-binding protein PstS 2</fullName>
        <shortName>PBP 2</shortName>
    </recommendedName>
</protein>
<comment type="function">
    <text evidence="1">Part of the ABC transporter complex PstSACB involved in phosphate import.</text>
</comment>
<comment type="subunit">
    <text evidence="3">The complex is composed of two ATP-binding proteins (PstB), two transmembrane proteins (PstC and PstA) and a solute-binding protein (PstS).</text>
</comment>
<comment type="subcellular location">
    <subcellularLocation>
        <location evidence="3">Cell membrane</location>
        <topology evidence="3">Lipid-anchor</topology>
    </subcellularLocation>
</comment>
<comment type="similarity">
    <text evidence="3">Belongs to the PstS family.</text>
</comment>
<name>PSTS2_STRA3</name>